<comment type="function">
    <text evidence="1">Cell wall formation.</text>
</comment>
<comment type="catalytic activity">
    <reaction evidence="1">
        <text>UDP-N-acetyl-alpha-D-muramate + NADP(+) = UDP-N-acetyl-3-O-(1-carboxyvinyl)-alpha-D-glucosamine + NADPH + H(+)</text>
        <dbReference type="Rhea" id="RHEA:12248"/>
        <dbReference type="ChEBI" id="CHEBI:15378"/>
        <dbReference type="ChEBI" id="CHEBI:57783"/>
        <dbReference type="ChEBI" id="CHEBI:58349"/>
        <dbReference type="ChEBI" id="CHEBI:68483"/>
        <dbReference type="ChEBI" id="CHEBI:70757"/>
        <dbReference type="EC" id="1.3.1.98"/>
    </reaction>
</comment>
<comment type="cofactor">
    <cofactor evidence="1">
        <name>FAD</name>
        <dbReference type="ChEBI" id="CHEBI:57692"/>
    </cofactor>
</comment>
<comment type="pathway">
    <text evidence="1">Cell wall biogenesis; peptidoglycan biosynthesis.</text>
</comment>
<comment type="subcellular location">
    <subcellularLocation>
        <location evidence="1">Cytoplasm</location>
    </subcellularLocation>
</comment>
<comment type="similarity">
    <text evidence="1">Belongs to the MurB family.</text>
</comment>
<keyword id="KW-0131">Cell cycle</keyword>
<keyword id="KW-0132">Cell division</keyword>
<keyword id="KW-0133">Cell shape</keyword>
<keyword id="KW-0961">Cell wall biogenesis/degradation</keyword>
<keyword id="KW-0963">Cytoplasm</keyword>
<keyword id="KW-0274">FAD</keyword>
<keyword id="KW-0285">Flavoprotein</keyword>
<keyword id="KW-0521">NADP</keyword>
<keyword id="KW-0560">Oxidoreductase</keyword>
<keyword id="KW-0573">Peptidoglycan synthesis</keyword>
<keyword id="KW-1185">Reference proteome</keyword>
<gene>
    <name evidence="1" type="primary">murB</name>
    <name type="ordered locus">SSP1978</name>
</gene>
<organism>
    <name type="scientific">Staphylococcus saprophyticus subsp. saprophyticus (strain ATCC 15305 / DSM 20229 / NCIMB 8711 / NCTC 7292 / S-41)</name>
    <dbReference type="NCBI Taxonomy" id="342451"/>
    <lineage>
        <taxon>Bacteria</taxon>
        <taxon>Bacillati</taxon>
        <taxon>Bacillota</taxon>
        <taxon>Bacilli</taxon>
        <taxon>Bacillales</taxon>
        <taxon>Staphylococcaceae</taxon>
        <taxon>Staphylococcus</taxon>
    </lineage>
</organism>
<accession>Q49VT7</accession>
<feature type="chain" id="PRO_0000224723" description="UDP-N-acetylenolpyruvoylglucosamine reductase">
    <location>
        <begin position="1"/>
        <end position="308"/>
    </location>
</feature>
<feature type="domain" description="FAD-binding PCMH-type" evidence="1">
    <location>
        <begin position="32"/>
        <end position="197"/>
    </location>
</feature>
<feature type="active site" evidence="1">
    <location>
        <position position="176"/>
    </location>
</feature>
<feature type="active site" description="Proton donor" evidence="1">
    <location>
        <position position="226"/>
    </location>
</feature>
<feature type="active site" evidence="1">
    <location>
        <position position="296"/>
    </location>
</feature>
<dbReference type="EC" id="1.3.1.98" evidence="1"/>
<dbReference type="EMBL" id="AP008934">
    <property type="protein sequence ID" value="BAE19123.1"/>
    <property type="molecule type" value="Genomic_DNA"/>
</dbReference>
<dbReference type="RefSeq" id="WP_002483921.1">
    <property type="nucleotide sequence ID" value="NZ_MTGA01000039.1"/>
</dbReference>
<dbReference type="SMR" id="Q49VT7"/>
<dbReference type="GeneID" id="66868139"/>
<dbReference type="KEGG" id="ssp:SSP1978"/>
<dbReference type="PATRIC" id="fig|342451.11.peg.1972"/>
<dbReference type="eggNOG" id="COG0812">
    <property type="taxonomic scope" value="Bacteria"/>
</dbReference>
<dbReference type="HOGENOM" id="CLU_035304_1_1_9"/>
<dbReference type="OrthoDB" id="9804753at2"/>
<dbReference type="UniPathway" id="UPA00219"/>
<dbReference type="Proteomes" id="UP000006371">
    <property type="component" value="Chromosome"/>
</dbReference>
<dbReference type="GO" id="GO:0005829">
    <property type="term" value="C:cytosol"/>
    <property type="evidence" value="ECO:0007669"/>
    <property type="project" value="TreeGrafter"/>
</dbReference>
<dbReference type="GO" id="GO:0071949">
    <property type="term" value="F:FAD binding"/>
    <property type="evidence" value="ECO:0007669"/>
    <property type="project" value="InterPro"/>
</dbReference>
<dbReference type="GO" id="GO:0008762">
    <property type="term" value="F:UDP-N-acetylmuramate dehydrogenase activity"/>
    <property type="evidence" value="ECO:0007669"/>
    <property type="project" value="UniProtKB-UniRule"/>
</dbReference>
<dbReference type="GO" id="GO:0051301">
    <property type="term" value="P:cell division"/>
    <property type="evidence" value="ECO:0007669"/>
    <property type="project" value="UniProtKB-KW"/>
</dbReference>
<dbReference type="GO" id="GO:0071555">
    <property type="term" value="P:cell wall organization"/>
    <property type="evidence" value="ECO:0007669"/>
    <property type="project" value="UniProtKB-KW"/>
</dbReference>
<dbReference type="GO" id="GO:0009252">
    <property type="term" value="P:peptidoglycan biosynthetic process"/>
    <property type="evidence" value="ECO:0007669"/>
    <property type="project" value="UniProtKB-UniRule"/>
</dbReference>
<dbReference type="GO" id="GO:0008360">
    <property type="term" value="P:regulation of cell shape"/>
    <property type="evidence" value="ECO:0007669"/>
    <property type="project" value="UniProtKB-KW"/>
</dbReference>
<dbReference type="FunFam" id="3.90.78.10:FF:000001">
    <property type="entry name" value="UDP-N-acetylenolpyruvoylglucosamine reductase"/>
    <property type="match status" value="1"/>
</dbReference>
<dbReference type="Gene3D" id="3.30.465.10">
    <property type="match status" value="1"/>
</dbReference>
<dbReference type="Gene3D" id="3.90.78.10">
    <property type="entry name" value="UDP-N-acetylenolpyruvoylglucosamine reductase, C-terminal domain"/>
    <property type="match status" value="1"/>
</dbReference>
<dbReference type="Gene3D" id="3.30.43.10">
    <property type="entry name" value="Uridine Diphospho-n-acetylenolpyruvylglucosamine Reductase, domain 2"/>
    <property type="match status" value="1"/>
</dbReference>
<dbReference type="HAMAP" id="MF_00037">
    <property type="entry name" value="MurB"/>
    <property type="match status" value="1"/>
</dbReference>
<dbReference type="InterPro" id="IPR016166">
    <property type="entry name" value="FAD-bd_PCMH"/>
</dbReference>
<dbReference type="InterPro" id="IPR036318">
    <property type="entry name" value="FAD-bd_PCMH-like_sf"/>
</dbReference>
<dbReference type="InterPro" id="IPR016167">
    <property type="entry name" value="FAD-bd_PCMH_sub1"/>
</dbReference>
<dbReference type="InterPro" id="IPR016169">
    <property type="entry name" value="FAD-bd_PCMH_sub2"/>
</dbReference>
<dbReference type="InterPro" id="IPR003170">
    <property type="entry name" value="MurB"/>
</dbReference>
<dbReference type="InterPro" id="IPR011601">
    <property type="entry name" value="MurB_C"/>
</dbReference>
<dbReference type="InterPro" id="IPR036635">
    <property type="entry name" value="MurB_C_sf"/>
</dbReference>
<dbReference type="InterPro" id="IPR006094">
    <property type="entry name" value="Oxid_FAD_bind_N"/>
</dbReference>
<dbReference type="NCBIfam" id="TIGR00179">
    <property type="entry name" value="murB"/>
    <property type="match status" value="1"/>
</dbReference>
<dbReference type="NCBIfam" id="NF010480">
    <property type="entry name" value="PRK13905.1"/>
    <property type="match status" value="1"/>
</dbReference>
<dbReference type="PANTHER" id="PTHR21071">
    <property type="entry name" value="UDP-N-ACETYLENOLPYRUVOYLGLUCOSAMINE REDUCTASE"/>
    <property type="match status" value="1"/>
</dbReference>
<dbReference type="PANTHER" id="PTHR21071:SF4">
    <property type="entry name" value="UDP-N-ACETYLENOLPYRUVOYLGLUCOSAMINE REDUCTASE"/>
    <property type="match status" value="1"/>
</dbReference>
<dbReference type="Pfam" id="PF01565">
    <property type="entry name" value="FAD_binding_4"/>
    <property type="match status" value="1"/>
</dbReference>
<dbReference type="Pfam" id="PF02873">
    <property type="entry name" value="MurB_C"/>
    <property type="match status" value="1"/>
</dbReference>
<dbReference type="SUPFAM" id="SSF56176">
    <property type="entry name" value="FAD-binding/transporter-associated domain-like"/>
    <property type="match status" value="1"/>
</dbReference>
<dbReference type="SUPFAM" id="SSF56194">
    <property type="entry name" value="Uridine diphospho-N-Acetylenolpyruvylglucosamine reductase, MurB, C-terminal domain"/>
    <property type="match status" value="1"/>
</dbReference>
<dbReference type="PROSITE" id="PS51387">
    <property type="entry name" value="FAD_PCMH"/>
    <property type="match status" value="1"/>
</dbReference>
<sequence>MHKDDILKELKAIVPEEIIKIDEPLKKYTYTQTGGKADYYLSPTHNEHVQAIVHYAYTHDIPVTYLGNGSNIIIREGGIRGIVISLLSLDYIDVSDDAIISGSGAAIIDVSRAARDHGLTGLEFACGIPGSIGGAVFMNAGAYGGEVKDCIDYALCVNNKGELITLTNKELELDYRNSIVQKEHLVVLEAAFTLAPGDQQEIQASMDDLTERRESKQPLEYPSCGSVFQRPPGHFAGKLIQDAHLQGHRIGGVEVSTKHAGFMVNVDKGTATDYEDLIHYVQKIVQEKFDVELHPEVRIIGEHPLNEQ</sequence>
<proteinExistence type="inferred from homology"/>
<name>MURB_STAS1</name>
<protein>
    <recommendedName>
        <fullName evidence="1">UDP-N-acetylenolpyruvoylglucosamine reductase</fullName>
        <ecNumber evidence="1">1.3.1.98</ecNumber>
    </recommendedName>
    <alternativeName>
        <fullName evidence="1">UDP-N-acetylmuramate dehydrogenase</fullName>
    </alternativeName>
</protein>
<evidence type="ECO:0000255" key="1">
    <source>
        <dbReference type="HAMAP-Rule" id="MF_00037"/>
    </source>
</evidence>
<reference key="1">
    <citation type="journal article" date="2005" name="Proc. Natl. Acad. Sci. U.S.A.">
        <title>Whole genome sequence of Staphylococcus saprophyticus reveals the pathogenesis of uncomplicated urinary tract infection.</title>
        <authorList>
            <person name="Kuroda M."/>
            <person name="Yamashita A."/>
            <person name="Hirakawa H."/>
            <person name="Kumano M."/>
            <person name="Morikawa K."/>
            <person name="Higashide M."/>
            <person name="Maruyama A."/>
            <person name="Inose Y."/>
            <person name="Matoba K."/>
            <person name="Toh H."/>
            <person name="Kuhara S."/>
            <person name="Hattori M."/>
            <person name="Ohta T."/>
        </authorList>
    </citation>
    <scope>NUCLEOTIDE SEQUENCE [LARGE SCALE GENOMIC DNA]</scope>
    <source>
        <strain>ATCC 15305 / DSM 20229 / NCIMB 8711 / NCTC 7292 / S-41</strain>
    </source>
</reference>